<dbReference type="EC" id="7.6.2.-" evidence="1"/>
<dbReference type="EMBL" id="J03685">
    <property type="protein sequence ID" value="AAA26229.1"/>
    <property type="molecule type" value="Genomic_DNA"/>
</dbReference>
<dbReference type="EMBL" id="AH010242">
    <property type="protein sequence ID" value="AAG61001.1"/>
    <property type="molecule type" value="Genomic_DNA"/>
</dbReference>
<dbReference type="EMBL" id="BA000040">
    <property type="protein sequence ID" value="BAC47295.1"/>
    <property type="molecule type" value="Genomic_DNA"/>
</dbReference>
<dbReference type="PIR" id="S27496">
    <property type="entry name" value="S27496"/>
</dbReference>
<dbReference type="RefSeq" id="NP_768670.1">
    <property type="nucleotide sequence ID" value="NC_004463.1"/>
</dbReference>
<dbReference type="RefSeq" id="WP_011084827.1">
    <property type="nucleotide sequence ID" value="NZ_CP011360.1"/>
</dbReference>
<dbReference type="SMR" id="P26050"/>
<dbReference type="STRING" id="224911.AAV28_06985"/>
<dbReference type="EnsemblBacteria" id="BAC47295">
    <property type="protein sequence ID" value="BAC47295"/>
    <property type="gene ID" value="BAC47295"/>
</dbReference>
<dbReference type="GeneID" id="92969617"/>
<dbReference type="KEGG" id="bja:blr2030"/>
<dbReference type="PATRIC" id="fig|224911.5.peg.1990"/>
<dbReference type="eggNOG" id="COG1131">
    <property type="taxonomic scope" value="Bacteria"/>
</dbReference>
<dbReference type="HOGENOM" id="CLU_000604_1_2_5"/>
<dbReference type="InParanoid" id="P26050"/>
<dbReference type="OrthoDB" id="9778547at2"/>
<dbReference type="PhylomeDB" id="P26050"/>
<dbReference type="Proteomes" id="UP000002526">
    <property type="component" value="Chromosome"/>
</dbReference>
<dbReference type="GO" id="GO:0005886">
    <property type="term" value="C:plasma membrane"/>
    <property type="evidence" value="ECO:0007669"/>
    <property type="project" value="UniProtKB-SubCell"/>
</dbReference>
<dbReference type="GO" id="GO:0005524">
    <property type="term" value="F:ATP binding"/>
    <property type="evidence" value="ECO:0007669"/>
    <property type="project" value="UniProtKB-KW"/>
</dbReference>
<dbReference type="GO" id="GO:0016887">
    <property type="term" value="F:ATP hydrolysis activity"/>
    <property type="evidence" value="ECO:0007669"/>
    <property type="project" value="InterPro"/>
</dbReference>
<dbReference type="GO" id="GO:0022857">
    <property type="term" value="F:transmembrane transporter activity"/>
    <property type="evidence" value="ECO:0007669"/>
    <property type="project" value="InterPro"/>
</dbReference>
<dbReference type="CDD" id="cd03263">
    <property type="entry name" value="ABC_subfamily_A"/>
    <property type="match status" value="1"/>
</dbReference>
<dbReference type="FunFam" id="3.40.50.300:FF:000589">
    <property type="entry name" value="ABC transporter, ATP-binding subunit"/>
    <property type="match status" value="1"/>
</dbReference>
<dbReference type="Gene3D" id="3.40.50.300">
    <property type="entry name" value="P-loop containing nucleotide triphosphate hydrolases"/>
    <property type="match status" value="1"/>
</dbReference>
<dbReference type="InterPro" id="IPR003593">
    <property type="entry name" value="AAA+_ATPase"/>
</dbReference>
<dbReference type="InterPro" id="IPR003439">
    <property type="entry name" value="ABC_transporter-like_ATP-bd"/>
</dbReference>
<dbReference type="InterPro" id="IPR017871">
    <property type="entry name" value="ABC_transporter-like_CS"/>
</dbReference>
<dbReference type="InterPro" id="IPR050763">
    <property type="entry name" value="ABC_transporter_ATP-binding"/>
</dbReference>
<dbReference type="InterPro" id="IPR005978">
    <property type="entry name" value="ABC_transptNodI"/>
</dbReference>
<dbReference type="InterPro" id="IPR027417">
    <property type="entry name" value="P-loop_NTPase"/>
</dbReference>
<dbReference type="NCBIfam" id="TIGR01288">
    <property type="entry name" value="nodI"/>
    <property type="match status" value="1"/>
</dbReference>
<dbReference type="NCBIfam" id="NF010059">
    <property type="entry name" value="PRK13536.1"/>
    <property type="match status" value="1"/>
</dbReference>
<dbReference type="NCBIfam" id="NF010060">
    <property type="entry name" value="PRK13537.1"/>
    <property type="match status" value="1"/>
</dbReference>
<dbReference type="PANTHER" id="PTHR42711">
    <property type="entry name" value="ABC TRANSPORTER ATP-BINDING PROTEIN"/>
    <property type="match status" value="1"/>
</dbReference>
<dbReference type="PANTHER" id="PTHR42711:SF5">
    <property type="entry name" value="ABC TRANSPORTER ATP-BINDING PROTEIN NATA"/>
    <property type="match status" value="1"/>
</dbReference>
<dbReference type="Pfam" id="PF00005">
    <property type="entry name" value="ABC_tran"/>
    <property type="match status" value="1"/>
</dbReference>
<dbReference type="SMART" id="SM00382">
    <property type="entry name" value="AAA"/>
    <property type="match status" value="1"/>
</dbReference>
<dbReference type="SUPFAM" id="SSF52540">
    <property type="entry name" value="P-loop containing nucleoside triphosphate hydrolases"/>
    <property type="match status" value="1"/>
</dbReference>
<dbReference type="PROSITE" id="PS00211">
    <property type="entry name" value="ABC_TRANSPORTER_1"/>
    <property type="match status" value="1"/>
</dbReference>
<dbReference type="PROSITE" id="PS50893">
    <property type="entry name" value="ABC_TRANSPORTER_2"/>
    <property type="match status" value="1"/>
</dbReference>
<dbReference type="PROSITE" id="PS51240">
    <property type="entry name" value="NODI"/>
    <property type="match status" value="1"/>
</dbReference>
<gene>
    <name evidence="1" type="primary">nodI</name>
    <name type="ordered locus">blr2030</name>
</gene>
<sequence length="306" mass="34213">MNMSNMAIDLVGVRKSFGDKVIVNDLSFSVARGECFGLLGPNGAGKSTIARMLLGMISPDRGKITVLDEPVPSRARAARVRVGVVPQFDNLEPEFTVRENLLVFGRYFGMSARTIEAVVPSLLEFARLESKADVRVSLLSGGMKRRLTLARALINDPHLLVMDEPTTGLDPHARHLIWERLRALLARGKTILLTTHFMEEAERLCDRLCVLESGCKIAEGKPDALIDEHIGCNVIEIYGGDLDQLRELIRPYARHIEVSGETLFCYARCPDEISVHLRGRTDLRVLQRPPNLEDVFLRLTGREMEK</sequence>
<accession>P26050</accession>
<accession>Q9AMY7</accession>
<keyword id="KW-0067">ATP-binding</keyword>
<keyword id="KW-0997">Cell inner membrane</keyword>
<keyword id="KW-1003">Cell membrane</keyword>
<keyword id="KW-0472">Membrane</keyword>
<keyword id="KW-0536">Nodulation</keyword>
<keyword id="KW-0547">Nucleotide-binding</keyword>
<keyword id="KW-1185">Reference proteome</keyword>
<keyword id="KW-1278">Translocase</keyword>
<keyword id="KW-0813">Transport</keyword>
<organism>
    <name type="scientific">Bradyrhizobium diazoefficiens (strain JCM 10833 / BCRC 13528 / IAM 13628 / NBRC 14792 / USDA 110)</name>
    <dbReference type="NCBI Taxonomy" id="224911"/>
    <lineage>
        <taxon>Bacteria</taxon>
        <taxon>Pseudomonadati</taxon>
        <taxon>Pseudomonadota</taxon>
        <taxon>Alphaproteobacteria</taxon>
        <taxon>Hyphomicrobiales</taxon>
        <taxon>Nitrobacteraceae</taxon>
        <taxon>Bradyrhizobium</taxon>
    </lineage>
</organism>
<proteinExistence type="inferred from homology"/>
<reference key="1">
    <citation type="journal article" date="1990" name="Mol. Plant Microbe Interact.">
        <title>Identification of nodS and nodU, two inducible genes inserted between the Bradyrhizobium japonicum nodYABC and nodIJ genes.</title>
        <authorList>
            <person name="Goettfert M."/>
            <person name="Hitz S."/>
            <person name="Hennecke H."/>
        </authorList>
    </citation>
    <scope>NUCLEOTIDE SEQUENCE [GENOMIC DNA]</scope>
    <source>
        <strain>JCM 10833 / BCRC 13528 / IAM 13628 / NBRC 14792 / USDA 110</strain>
    </source>
</reference>
<reference key="2">
    <citation type="journal article" date="2001" name="J. Bacteriol.">
        <title>Potential symbiosis-specific genes uncovered by sequencing a 410-kb DNA region of the Bradyrhizobium japonicum chromosome.</title>
        <authorList>
            <person name="Goettfert M."/>
            <person name="Roethlisberger S."/>
            <person name="Kuendig C."/>
            <person name="Beck C."/>
            <person name="Marty R."/>
            <person name="Hennecke H."/>
        </authorList>
    </citation>
    <scope>NUCLEOTIDE SEQUENCE [GENOMIC DNA]</scope>
    <source>
        <strain>USDA 110spc4</strain>
    </source>
</reference>
<reference key="3">
    <citation type="journal article" date="2002" name="DNA Res.">
        <title>Complete genomic sequence of nitrogen-fixing symbiotic bacterium Bradyrhizobium japonicum USDA110.</title>
        <authorList>
            <person name="Kaneko T."/>
            <person name="Nakamura Y."/>
            <person name="Sato S."/>
            <person name="Minamisawa K."/>
            <person name="Uchiumi T."/>
            <person name="Sasamoto S."/>
            <person name="Watanabe A."/>
            <person name="Idesawa K."/>
            <person name="Iriguchi M."/>
            <person name="Kawashima K."/>
            <person name="Kohara M."/>
            <person name="Matsumoto M."/>
            <person name="Shimpo S."/>
            <person name="Tsuruoka H."/>
            <person name="Wada T."/>
            <person name="Yamada M."/>
            <person name="Tabata S."/>
        </authorList>
    </citation>
    <scope>NUCLEOTIDE SEQUENCE [LARGE SCALE GENOMIC DNA]</scope>
    <source>
        <strain>JCM 10833 / BCRC 13528 / IAM 13628 / NBRC 14792 / USDA 110</strain>
    </source>
</reference>
<protein>
    <recommendedName>
        <fullName evidence="1">Nod factor export ATP-binding protein I</fullName>
        <ecNumber evidence="1">7.6.2.-</ecNumber>
    </recommendedName>
    <alternativeName>
        <fullName evidence="1">Nodulation ATP-binding protein I</fullName>
    </alternativeName>
</protein>
<feature type="chain" id="PRO_0000092635" description="Nod factor export ATP-binding protein I">
    <location>
        <begin position="1"/>
        <end position="306"/>
    </location>
</feature>
<feature type="domain" description="ABC transporter" evidence="1">
    <location>
        <begin position="8"/>
        <end position="238"/>
    </location>
</feature>
<feature type="binding site" evidence="1">
    <location>
        <begin position="40"/>
        <end position="47"/>
    </location>
    <ligand>
        <name>ATP</name>
        <dbReference type="ChEBI" id="CHEBI:30616"/>
    </ligand>
</feature>
<feature type="sequence conflict" description="In Ref. 1; AAA26229." evidence="2" ref="1">
    <original>R</original>
    <variation>A</variation>
    <location>
        <position position="81"/>
    </location>
</feature>
<name>NODI_BRADU</name>
<comment type="function">
    <text evidence="1">Part of the ABC transporter complex NodIJ involved in the export of the nodulation factors (Nod factors), the bacterial signal molecules that induce symbiosis and subsequent nodulation induction. Nod factors are LCO (lipo-chitin oligosaccharide), a modified beta-1,4-linked N-acetylglucosamine oligosaccharide. This subunit is responsible for energy coupling to the transport system.</text>
</comment>
<comment type="subunit">
    <text evidence="1">The complex is composed of two ATP-binding proteins (NodI) and two transmembrane proteins (NodJ).</text>
</comment>
<comment type="subcellular location">
    <subcellularLocation>
        <location evidence="1">Cell inner membrane</location>
        <topology evidence="1">Peripheral membrane protein</topology>
    </subcellularLocation>
</comment>
<comment type="similarity">
    <text evidence="1">Belongs to the ABC transporter superfamily. Lipooligosaccharide exporter (TC 3.A.1.102) family.</text>
</comment>
<evidence type="ECO:0000255" key="1">
    <source>
        <dbReference type="HAMAP-Rule" id="MF_01704"/>
    </source>
</evidence>
<evidence type="ECO:0000305" key="2"/>